<name>YCGL_ECO57</name>
<sequence>MPKPGILKSKSMFCVIYRSSKRDQTYLYVEKKDDFSRVPEELMKGFGQPQLAMILPLDGRKKLVNADIEKVKQALTEQGYYLQLPPPPEDLLKQHLSVMGQKTDDTNK</sequence>
<reference key="1">
    <citation type="journal article" date="2001" name="Nature">
        <title>Genome sequence of enterohaemorrhagic Escherichia coli O157:H7.</title>
        <authorList>
            <person name="Perna N.T."/>
            <person name="Plunkett G. III"/>
            <person name="Burland V."/>
            <person name="Mau B."/>
            <person name="Glasner J.D."/>
            <person name="Rose D.J."/>
            <person name="Mayhew G.F."/>
            <person name="Evans P.S."/>
            <person name="Gregor J."/>
            <person name="Kirkpatrick H.A."/>
            <person name="Posfai G."/>
            <person name="Hackett J."/>
            <person name="Klink S."/>
            <person name="Boutin A."/>
            <person name="Shao Y."/>
            <person name="Miller L."/>
            <person name="Grotbeck E.J."/>
            <person name="Davis N.W."/>
            <person name="Lim A."/>
            <person name="Dimalanta E.T."/>
            <person name="Potamousis K."/>
            <person name="Apodaca J."/>
            <person name="Anantharaman T.S."/>
            <person name="Lin J."/>
            <person name="Yen G."/>
            <person name="Schwartz D.C."/>
            <person name="Welch R.A."/>
            <person name="Blattner F.R."/>
        </authorList>
    </citation>
    <scope>NUCLEOTIDE SEQUENCE [LARGE SCALE GENOMIC DNA]</scope>
    <source>
        <strain>O157:H7 / EDL933 / ATCC 700927 / EHEC</strain>
    </source>
</reference>
<reference key="2">
    <citation type="journal article" date="2001" name="DNA Res.">
        <title>Complete genome sequence of enterohemorrhagic Escherichia coli O157:H7 and genomic comparison with a laboratory strain K-12.</title>
        <authorList>
            <person name="Hayashi T."/>
            <person name="Makino K."/>
            <person name="Ohnishi M."/>
            <person name="Kurokawa K."/>
            <person name="Ishii K."/>
            <person name="Yokoyama K."/>
            <person name="Han C.-G."/>
            <person name="Ohtsubo E."/>
            <person name="Nakayama K."/>
            <person name="Murata T."/>
            <person name="Tanaka M."/>
            <person name="Tobe T."/>
            <person name="Iida T."/>
            <person name="Takami H."/>
            <person name="Honda T."/>
            <person name="Sasakawa C."/>
            <person name="Ogasawara N."/>
            <person name="Yasunaga T."/>
            <person name="Kuhara S."/>
            <person name="Shiba T."/>
            <person name="Hattori M."/>
            <person name="Shinagawa H."/>
        </authorList>
    </citation>
    <scope>NUCLEOTIDE SEQUENCE [LARGE SCALE GENOMIC DNA]</scope>
    <source>
        <strain>O157:H7 / Sakai / RIMD 0509952 / EHEC</strain>
    </source>
</reference>
<feature type="chain" id="PRO_0000168855" description="Protein YcgL">
    <location>
        <begin position="1"/>
        <end position="108"/>
    </location>
</feature>
<feature type="domain" description="YcgL" evidence="1">
    <location>
        <begin position="12"/>
        <end position="96"/>
    </location>
</feature>
<organism>
    <name type="scientific">Escherichia coli O157:H7</name>
    <dbReference type="NCBI Taxonomy" id="83334"/>
    <lineage>
        <taxon>Bacteria</taxon>
        <taxon>Pseudomonadati</taxon>
        <taxon>Pseudomonadota</taxon>
        <taxon>Gammaproteobacteria</taxon>
        <taxon>Enterobacterales</taxon>
        <taxon>Enterobacteriaceae</taxon>
        <taxon>Escherichia</taxon>
    </lineage>
</organism>
<protein>
    <recommendedName>
        <fullName evidence="1">Protein YcgL</fullName>
    </recommendedName>
</protein>
<dbReference type="EMBL" id="AE005174">
    <property type="protein sequence ID" value="AAG56030.1"/>
    <property type="molecule type" value="Genomic_DNA"/>
</dbReference>
<dbReference type="EMBL" id="BA000007">
    <property type="protein sequence ID" value="BAB35097.2"/>
    <property type="status" value="ALT_INIT"/>
    <property type="molecule type" value="Genomic_DNA"/>
</dbReference>
<dbReference type="PIR" id="B85696">
    <property type="entry name" value="B85696"/>
</dbReference>
<dbReference type="PIR" id="B90838">
    <property type="entry name" value="B90838"/>
</dbReference>
<dbReference type="RefSeq" id="NP_309701.2">
    <property type="nucleotide sequence ID" value="NC_002695.1"/>
</dbReference>
<dbReference type="SMR" id="P0AB45"/>
<dbReference type="STRING" id="155864.Z1941"/>
<dbReference type="GeneID" id="913199"/>
<dbReference type="KEGG" id="ece:Z1941"/>
<dbReference type="KEGG" id="ecs:ECs_1674"/>
<dbReference type="PATRIC" id="fig|386585.9.peg.1770"/>
<dbReference type="eggNOG" id="COG3100">
    <property type="taxonomic scope" value="Bacteria"/>
</dbReference>
<dbReference type="HOGENOM" id="CLU_155118_1_0_6"/>
<dbReference type="OMA" id="MICAVYK"/>
<dbReference type="Proteomes" id="UP000000558">
    <property type="component" value="Chromosome"/>
</dbReference>
<dbReference type="Proteomes" id="UP000002519">
    <property type="component" value="Chromosome"/>
</dbReference>
<dbReference type="Gene3D" id="3.10.510.20">
    <property type="entry name" value="YcgL domain"/>
    <property type="match status" value="1"/>
</dbReference>
<dbReference type="HAMAP" id="MF_01866">
    <property type="entry name" value="UPF0745"/>
    <property type="match status" value="1"/>
</dbReference>
<dbReference type="InterPro" id="IPR038068">
    <property type="entry name" value="YcgL-like_sf"/>
</dbReference>
<dbReference type="InterPro" id="IPR027354">
    <property type="entry name" value="YcgL_dom"/>
</dbReference>
<dbReference type="PANTHER" id="PTHR38109">
    <property type="entry name" value="PROTEIN YCGL"/>
    <property type="match status" value="1"/>
</dbReference>
<dbReference type="PANTHER" id="PTHR38109:SF1">
    <property type="entry name" value="PROTEIN YCGL"/>
    <property type="match status" value="1"/>
</dbReference>
<dbReference type="Pfam" id="PF05166">
    <property type="entry name" value="YcgL"/>
    <property type="match status" value="1"/>
</dbReference>
<dbReference type="SUPFAM" id="SSF160191">
    <property type="entry name" value="YcgL-like"/>
    <property type="match status" value="1"/>
</dbReference>
<dbReference type="PROSITE" id="PS51648">
    <property type="entry name" value="YCGL"/>
    <property type="match status" value="1"/>
</dbReference>
<keyword id="KW-1185">Reference proteome</keyword>
<comment type="sequence caution" evidence="2">
    <conflict type="erroneous initiation">
        <sequence resource="EMBL-CDS" id="BAB35097"/>
    </conflict>
    <text>Truncated N-terminus.</text>
</comment>
<evidence type="ECO:0000255" key="1">
    <source>
        <dbReference type="HAMAP-Rule" id="MF_01866"/>
    </source>
</evidence>
<evidence type="ECO:0000305" key="2"/>
<proteinExistence type="inferred from homology"/>
<accession>P0AB45</accession>
<accession>P76003</accession>
<gene>
    <name evidence="1" type="primary">ycgL</name>
    <name type="ordered locus">Z1941</name>
    <name type="ordered locus">ECs1674</name>
</gene>